<sequence>MKLLLRALATFVLLNGVDSVADESFQKCNVTGGPHGKEFDDSNATSRGLILRALRLCGVDFVDGIGVTIWDLSVEENAPFHGLDQNCRDVQLSPYEYITSVEFHSAKIDSETRVGFIRLLSQENKTYEIGKMSNRGKEGISECTAPEGYQLAGFYGRSEDKIFALGALWGPLPEKWPLQG</sequence>
<accession>A0A172M485</accession>
<protein>
    <recommendedName>
        <fullName evidence="5">Secreted RxLR effector protein 19</fullName>
    </recommendedName>
</protein>
<proteinExistence type="evidence at transcript level"/>
<keyword id="KW-1035">Host cytoplasm</keyword>
<keyword id="KW-1048">Host nucleus</keyword>
<keyword id="KW-0964">Secreted</keyword>
<keyword id="KW-0732">Signal</keyword>
<keyword id="KW-0843">Virulence</keyword>
<gene>
    <name evidence="5" type="primary">RxLR19</name>
</gene>
<dbReference type="EMBL" id="KX010954">
    <property type="protein sequence ID" value="ANC73374.1"/>
    <property type="molecule type" value="mRNA"/>
</dbReference>
<dbReference type="SMR" id="A0A172M485"/>
<dbReference type="GO" id="GO:0005576">
    <property type="term" value="C:extracellular region"/>
    <property type="evidence" value="ECO:0007669"/>
    <property type="project" value="UniProtKB-SubCell"/>
</dbReference>
<dbReference type="GO" id="GO:0030430">
    <property type="term" value="C:host cell cytoplasm"/>
    <property type="evidence" value="ECO:0007669"/>
    <property type="project" value="UniProtKB-SubCell"/>
</dbReference>
<dbReference type="GO" id="GO:0042025">
    <property type="term" value="C:host cell nucleus"/>
    <property type="evidence" value="ECO:0007669"/>
    <property type="project" value="UniProtKB-SubCell"/>
</dbReference>
<dbReference type="Gene3D" id="2.100.10.30">
    <property type="entry name" value="Jacalin-like lectin domain"/>
    <property type="match status" value="1"/>
</dbReference>
<dbReference type="InterPro" id="IPR001229">
    <property type="entry name" value="Jacalin-like_lectin_dom"/>
</dbReference>
<dbReference type="InterPro" id="IPR036404">
    <property type="entry name" value="Jacalin-like_lectin_dom_sf"/>
</dbReference>
<dbReference type="Pfam" id="PF01419">
    <property type="entry name" value="Jacalin"/>
    <property type="match status" value="1"/>
</dbReference>
<dbReference type="SMART" id="SM00915">
    <property type="entry name" value="Jacalin"/>
    <property type="match status" value="1"/>
</dbReference>
<dbReference type="SUPFAM" id="SSF51101">
    <property type="entry name" value="Mannose-binding lectins"/>
    <property type="match status" value="1"/>
</dbReference>
<dbReference type="PROSITE" id="PS51752">
    <property type="entry name" value="JACALIN_LECTIN"/>
    <property type="match status" value="1"/>
</dbReference>
<reference key="1">
    <citation type="journal article" date="2016" name="Front. Microbiol.">
        <title>Studying the mechanism of Plasmopara viticola RxLR effectors on suppressing plant immunity.</title>
        <authorList>
            <person name="Xiang J."/>
            <person name="Li X."/>
            <person name="Wu J."/>
            <person name="Yin L."/>
            <person name="Zhang Y."/>
            <person name="Lu J."/>
        </authorList>
    </citation>
    <scope>NUCLEOTIDE SEQUENCE [MRNA]</scope>
    <scope>INDUCTION</scope>
    <scope>FUNCTION</scope>
    <scope>SUBCELLULAR LOCATION</scope>
    <source>
        <strain>ZJ-1-1</strain>
    </source>
</reference>
<reference key="2">
    <citation type="journal article" date="2015" name="Physiol. Mol. Plant Pathol.">
        <title>Characterization of the secretome of Plasmopara viticola by de novo transcriptome analysis.</title>
        <authorList>
            <person name="Yin L."/>
            <person name="Li X."/>
            <person name="Xiang J."/>
            <person name="Qu J."/>
            <person name="Zhang Y."/>
            <person name="Dry I.B."/>
            <person name="Lu J."/>
        </authorList>
    </citation>
    <scope>IDENTIFICATION</scope>
    <scope>INDUCTION</scope>
    <scope>FUNCTION</scope>
    <scope>DOMAIN</scope>
</reference>
<name>RLR19_PLAVT</name>
<comment type="function">
    <text evidence="3 4">Effector that partially suppresses the tobacco programmed cell death induced by cell death-inducing proteins.</text>
</comment>
<comment type="subcellular location">
    <subcellularLocation>
        <location evidence="3">Secreted</location>
    </subcellularLocation>
    <subcellularLocation>
        <location evidence="3">Host cytoplasm</location>
    </subcellularLocation>
    <subcellularLocation>
        <location evidence="3">Host nucleus</location>
    </subcellularLocation>
</comment>
<comment type="induction">
    <text evidence="3 4">Expression is up-regulated at later stages of infection.</text>
</comment>
<comment type="domain">
    <text evidence="7">The RxLR-dEER motif acts to carry the protein into the host cell cytoplasm through binding to cell surface phosphatidylinositol-3-phosphate.</text>
</comment>
<comment type="similarity">
    <text evidence="6">Belongs to the RxLR effector family.</text>
</comment>
<evidence type="ECO:0000255" key="1"/>
<evidence type="ECO:0000255" key="2">
    <source>
        <dbReference type="PROSITE-ProRule" id="PRU01088"/>
    </source>
</evidence>
<evidence type="ECO:0000269" key="3">
    <source>
    </source>
</evidence>
<evidence type="ECO:0000269" key="4">
    <source ref="2"/>
</evidence>
<evidence type="ECO:0000303" key="5">
    <source ref="2"/>
</evidence>
<evidence type="ECO:0000305" key="6"/>
<evidence type="ECO:0000305" key="7">
    <source ref="2"/>
</evidence>
<organism>
    <name type="scientific">Plasmopara viticola</name>
    <name type="common">Downy mildew of grapevine</name>
    <name type="synonym">Botrytis viticola</name>
    <dbReference type="NCBI Taxonomy" id="143451"/>
    <lineage>
        <taxon>Eukaryota</taxon>
        <taxon>Sar</taxon>
        <taxon>Stramenopiles</taxon>
        <taxon>Oomycota</taxon>
        <taxon>Peronosporales</taxon>
        <taxon>Peronosporaceae</taxon>
        <taxon>Plasmopara</taxon>
    </lineage>
</organism>
<feature type="signal peptide" evidence="1">
    <location>
        <begin position="1"/>
        <end position="19"/>
    </location>
</feature>
<feature type="chain" id="PRO_5007999406" description="Secreted RxLR effector protein 19">
    <location>
        <begin position="20"/>
        <end position="180"/>
    </location>
</feature>
<feature type="domain" description="Jacalin-type lectin" evidence="2">
    <location>
        <begin position="25"/>
        <end position="171"/>
    </location>
</feature>
<feature type="short sequence motif" description="RxLR-dEER" evidence="7">
    <location>
        <begin position="52"/>
        <end position="77"/>
    </location>
</feature>